<protein>
    <recommendedName>
        <fullName evidence="6">RNA-binding NOB1-like protein</fullName>
        <shortName evidence="6">AtNob1</shortName>
        <ecNumber evidence="5">3.1.-.-</ecNumber>
    </recommendedName>
</protein>
<accession>Q9FLL1</accession>
<accession>Q681U9</accession>
<name>NOB1_ARATH</name>
<keyword id="KW-0175">Coiled coil</keyword>
<keyword id="KW-0963">Cytoplasm</keyword>
<keyword id="KW-0255">Endonuclease</keyword>
<keyword id="KW-0378">Hydrolase</keyword>
<keyword id="KW-0479">Metal-binding</keyword>
<keyword id="KW-0540">Nuclease</keyword>
<keyword id="KW-0539">Nucleus</keyword>
<keyword id="KW-1185">Reference proteome</keyword>
<keyword id="KW-0690">Ribosome biogenesis</keyword>
<keyword id="KW-0698">rRNA processing</keyword>
<keyword id="KW-0862">Zinc</keyword>
<keyword id="KW-0863">Zinc-finger</keyword>
<sequence>MDPKPTSMWSSIVKKDPPSKPPVNDGAPAAILGMVGNCKSTKGISIAVVDANAIIEGRQSLTNFADKFVTVPEVLSEIRDPASRRRLAFIPFTIDTMEPSPESLSKVIKFARATGDLQSLSDVDLKLIALSYTLEAQVYGTKNLRDVPPPIQTVRVKRLPEKDLPGWGSNVANLEEWEALENETEEKSNANSKILPLKDLNMNIIASDNVSEVGSVVSHTENHEEDVQEGGKKHRRYPPKKTEIKLEGKMVVEGVDASQGQYDDDDDASDWRPAVSRSTHSKYLRRKARWEHYNALAEQEIQKDQEADKARHTKEANETHAKDSGKNGEDISSILKDMRLEEESLRALQEETEETNAEATLINGEDDIDHDIEVEAEGIDVANQALENLEIASEAEDTFEASSIGDDGSSEQSWSLRALSESSVACITGDYAMQNVILQMGLRLLAPGGMQIRQLHRWILKCHACYTVTPEIGRIFCPKCGNGGTLRKVAVTIGANGAIIAACKPRITLRGTQYSIPMPKGGREAITKNLILREDQLPQKLLHPRTKKKASKPGDEYFVSDDVFLNHHSDRKAPLQPPVRKAMSVFSQKRNPNDNHYSRSMH</sequence>
<dbReference type="EC" id="3.1.-.-" evidence="5"/>
<dbReference type="EMBL" id="AB010072">
    <property type="protein sequence ID" value="BAB09721.1"/>
    <property type="molecule type" value="Genomic_DNA"/>
</dbReference>
<dbReference type="EMBL" id="CP002688">
    <property type="protein sequence ID" value="AED94652.1"/>
    <property type="molecule type" value="Genomic_DNA"/>
</dbReference>
<dbReference type="EMBL" id="AK175518">
    <property type="protein sequence ID" value="BAD43281.1"/>
    <property type="molecule type" value="mRNA"/>
</dbReference>
<dbReference type="RefSeq" id="NP_198935.1">
    <property type="nucleotide sequence ID" value="NM_123484.3"/>
</dbReference>
<dbReference type="FunCoup" id="Q9FLL1">
    <property type="interactions" value="4264"/>
</dbReference>
<dbReference type="IntAct" id="Q9FLL1">
    <property type="interactions" value="1"/>
</dbReference>
<dbReference type="STRING" id="3702.Q9FLL1"/>
<dbReference type="GlyGen" id="Q9FLL1">
    <property type="glycosylation" value="1 site"/>
</dbReference>
<dbReference type="PaxDb" id="3702-AT5G41190.1"/>
<dbReference type="ProteomicsDB" id="187155"/>
<dbReference type="EnsemblPlants" id="AT5G41190.1">
    <property type="protein sequence ID" value="AT5G41190.1"/>
    <property type="gene ID" value="AT5G41190"/>
</dbReference>
<dbReference type="GeneID" id="834121"/>
<dbReference type="Gramene" id="AT5G41190.1">
    <property type="protein sequence ID" value="AT5G41190.1"/>
    <property type="gene ID" value="AT5G41190"/>
</dbReference>
<dbReference type="KEGG" id="ath:AT5G41190"/>
<dbReference type="Araport" id="AT5G41190"/>
<dbReference type="TAIR" id="AT5G41190">
    <property type="gene designation" value="NOB1"/>
</dbReference>
<dbReference type="eggNOG" id="KOG2463">
    <property type="taxonomic scope" value="Eukaryota"/>
</dbReference>
<dbReference type="HOGENOM" id="CLU_024666_1_0_1"/>
<dbReference type="InParanoid" id="Q9FLL1"/>
<dbReference type="OMA" id="GYELECE"/>
<dbReference type="PhylomeDB" id="Q9FLL1"/>
<dbReference type="PRO" id="PR:Q9FLL1"/>
<dbReference type="Proteomes" id="UP000006548">
    <property type="component" value="Chromosome 5"/>
</dbReference>
<dbReference type="ExpressionAtlas" id="Q9FLL1">
    <property type="expression patterns" value="baseline and differential"/>
</dbReference>
<dbReference type="GO" id="GO:0005737">
    <property type="term" value="C:cytoplasm"/>
    <property type="evidence" value="ECO:0000314"/>
    <property type="project" value="TAIR"/>
</dbReference>
<dbReference type="GO" id="GO:0005654">
    <property type="term" value="C:nucleoplasm"/>
    <property type="evidence" value="ECO:0000314"/>
    <property type="project" value="UniProtKB"/>
</dbReference>
<dbReference type="GO" id="GO:0004521">
    <property type="term" value="F:RNA endonuclease activity"/>
    <property type="evidence" value="ECO:0000314"/>
    <property type="project" value="TAIR"/>
</dbReference>
<dbReference type="GO" id="GO:0008270">
    <property type="term" value="F:zinc ion binding"/>
    <property type="evidence" value="ECO:0007669"/>
    <property type="project" value="UniProtKB-KW"/>
</dbReference>
<dbReference type="GO" id="GO:0009553">
    <property type="term" value="P:embryo sac development"/>
    <property type="evidence" value="ECO:0000315"/>
    <property type="project" value="TAIR"/>
</dbReference>
<dbReference type="GO" id="GO:0009555">
    <property type="term" value="P:pollen development"/>
    <property type="evidence" value="ECO:0000315"/>
    <property type="project" value="TAIR"/>
</dbReference>
<dbReference type="GO" id="GO:0042274">
    <property type="term" value="P:ribosomal small subunit biogenesis"/>
    <property type="evidence" value="ECO:0007669"/>
    <property type="project" value="InterPro"/>
</dbReference>
<dbReference type="GO" id="GO:0006364">
    <property type="term" value="P:rRNA processing"/>
    <property type="evidence" value="ECO:0000315"/>
    <property type="project" value="TAIR"/>
</dbReference>
<dbReference type="CDD" id="cd09876">
    <property type="entry name" value="PIN_Nob1-like"/>
    <property type="match status" value="1"/>
</dbReference>
<dbReference type="FunFam" id="3.40.50.1010:FF:000020">
    <property type="entry name" value="20S-pre-rRNA D-site endonuclease NOB1"/>
    <property type="match status" value="1"/>
</dbReference>
<dbReference type="Gene3D" id="3.40.50.1010">
    <property type="entry name" value="5'-nuclease"/>
    <property type="match status" value="1"/>
</dbReference>
<dbReference type="Gene3D" id="6.20.210.10">
    <property type="entry name" value="Nin one binding (NOB1), Zn-ribbon-like"/>
    <property type="match status" value="1"/>
</dbReference>
<dbReference type="InterPro" id="IPR039907">
    <property type="entry name" value="NOB1"/>
</dbReference>
<dbReference type="InterPro" id="IPR017117">
    <property type="entry name" value="Nob1_euk"/>
</dbReference>
<dbReference type="InterPro" id="IPR036283">
    <property type="entry name" value="NOB1_Zf-like_sf"/>
</dbReference>
<dbReference type="InterPro" id="IPR014881">
    <property type="entry name" value="NOB1_Zn-bd"/>
</dbReference>
<dbReference type="InterPro" id="IPR033411">
    <property type="entry name" value="Ribonuclease_PIN"/>
</dbReference>
<dbReference type="PANTHER" id="PTHR12814">
    <property type="entry name" value="RNA-BINDING PROTEIN NOB1"/>
    <property type="match status" value="1"/>
</dbReference>
<dbReference type="PANTHER" id="PTHR12814:SF2">
    <property type="entry name" value="RNA-BINDING PROTEIN NOB1"/>
    <property type="match status" value="1"/>
</dbReference>
<dbReference type="Pfam" id="PF17146">
    <property type="entry name" value="PIN_6"/>
    <property type="match status" value="1"/>
</dbReference>
<dbReference type="Pfam" id="PF08772">
    <property type="entry name" value="Zn_ribbon_NOB1"/>
    <property type="match status" value="1"/>
</dbReference>
<dbReference type="PIRSF" id="PIRSF037125">
    <property type="entry name" value="D-site_20S_pre-rRNA_nuclease"/>
    <property type="match status" value="1"/>
</dbReference>
<dbReference type="SUPFAM" id="SSF144206">
    <property type="entry name" value="NOB1 zinc finger-like"/>
    <property type="match status" value="1"/>
</dbReference>
<feature type="chain" id="PRO_0000448721" description="RNA-binding NOB1-like protein">
    <location>
        <begin position="1"/>
        <end position="602"/>
    </location>
</feature>
<feature type="domain" description="PINc" evidence="3">
    <location>
        <begin position="48"/>
        <end position="134"/>
    </location>
</feature>
<feature type="zinc finger region" description="NOB1" evidence="3">
    <location>
        <begin position="452"/>
        <end position="522"/>
    </location>
</feature>
<feature type="region of interest" description="Disordered" evidence="4">
    <location>
        <begin position="1"/>
        <end position="25"/>
    </location>
</feature>
<feature type="region of interest" description="Disordered" evidence="4">
    <location>
        <begin position="258"/>
        <end position="278"/>
    </location>
</feature>
<feature type="region of interest" description="Disordered" evidence="4">
    <location>
        <begin position="301"/>
        <end position="331"/>
    </location>
</feature>
<feature type="coiled-coil region" evidence="3">
    <location>
        <begin position="331"/>
        <end position="365"/>
    </location>
</feature>
<feature type="compositionally biased region" description="Basic and acidic residues" evidence="4">
    <location>
        <begin position="301"/>
        <end position="329"/>
    </location>
</feature>
<feature type="binding site" evidence="1">
    <location>
        <position position="462"/>
    </location>
    <ligand>
        <name>Zn(2+)</name>
        <dbReference type="ChEBI" id="CHEBI:29105"/>
    </ligand>
</feature>
<feature type="binding site" evidence="1">
    <location>
        <position position="465"/>
    </location>
    <ligand>
        <name>Zn(2+)</name>
        <dbReference type="ChEBI" id="CHEBI:29105"/>
    </ligand>
</feature>
<feature type="binding site" evidence="1">
    <location>
        <position position="477"/>
    </location>
    <ligand>
        <name>Zn(2+)</name>
        <dbReference type="ChEBI" id="CHEBI:29105"/>
    </ligand>
</feature>
<feature type="binding site" evidence="1">
    <location>
        <position position="480"/>
    </location>
    <ligand>
        <name>Zn(2+)</name>
        <dbReference type="ChEBI" id="CHEBI:29105"/>
    </ligand>
</feature>
<feature type="mutagenesis site" description="Impaired endonuclease activity." evidence="5">
    <original>D</original>
    <variation>N</variation>
    <location>
        <position position="50"/>
    </location>
</feature>
<feature type="sequence conflict" description="In Ref. 3; BAD43281." evidence="7" ref="3">
    <original>N</original>
    <variation>D</variation>
    <location>
        <position position="591"/>
    </location>
</feature>
<evidence type="ECO:0000250" key="1">
    <source>
        <dbReference type="UniProtKB" id="Q8BW10"/>
    </source>
</evidence>
<evidence type="ECO:0000250" key="2">
    <source>
        <dbReference type="UniProtKB" id="Q9ULX3"/>
    </source>
</evidence>
<evidence type="ECO:0000255" key="3"/>
<evidence type="ECO:0000256" key="4">
    <source>
        <dbReference type="SAM" id="MobiDB-lite"/>
    </source>
</evidence>
<evidence type="ECO:0000269" key="5">
    <source>
    </source>
</evidence>
<evidence type="ECO:0000303" key="6">
    <source>
    </source>
</evidence>
<evidence type="ECO:0000305" key="7"/>
<evidence type="ECO:0000312" key="8">
    <source>
        <dbReference type="Araport" id="AT5G41190"/>
    </source>
</evidence>
<evidence type="ECO:0000312" key="9">
    <source>
        <dbReference type="EMBL" id="BAB09721.1"/>
    </source>
</evidence>
<comment type="function">
    <text evidence="5">Essential protein required during embryogenesis and pollen development (PubMed:23382868). Endonuclease cleaving pre-rRNA at the 3' end of the mature 18S rRNA (D-site); cleaves 20S pre-rRNA in the cytoplasm (PubMed:23382868). Required for processing of 20S pre-rRNA precursor and biogenesis of 40S ribosomal subunits (PubMed:23382868).</text>
</comment>
<comment type="subunit">
    <text evidence="5">Component of the small ribosomal subunit, ribosomal RNA processing complex (SSU RRP complex).</text>
</comment>
<comment type="subcellular location">
    <subcellularLocation>
        <location evidence="2">Nucleus</location>
    </subcellularLocation>
    <subcellularLocation>
        <location evidence="5">Nucleus</location>
        <location evidence="5">Nucleoplasm</location>
    </subcellularLocation>
    <subcellularLocation>
        <location evidence="5">Cytoplasm</location>
    </subcellularLocation>
</comment>
<comment type="tissue specificity">
    <text evidence="5">Highly expressed in flowers and siliques and at lower levels in roots, hypocotyls, stems, leaves and seeds.</text>
</comment>
<comment type="disruption phenotype">
    <text evidence="5">Delayed pollen development with reduced nuclei content leading to reduced pollen germination capacity, and pale seeds with arrested embryo development at the globular stage in homozygous plants (PubMed:23382868). In heterozygous plants, strong accumulation of the 23S-like precursor P-A3, and moderate increased levels of 35S/33S precursors and 20S pre-rRNAs (PubMed:23382868). Alterated leaf morphology and inhibited inflorescence elongation leading to a loss of reproduction, seeds abortion and slightly reduced siliques size (PubMed:23382868).</text>
</comment>
<comment type="similarity">
    <text evidence="7">Belongs to the NOB1 family.</text>
</comment>
<gene>
    <name evidence="6" type="primary">NOB1</name>
    <name evidence="8" type="ordered locus">At5g41190</name>
    <name evidence="9" type="ORF">MEE6.26</name>
</gene>
<proteinExistence type="evidence at protein level"/>
<organism>
    <name type="scientific">Arabidopsis thaliana</name>
    <name type="common">Mouse-ear cress</name>
    <dbReference type="NCBI Taxonomy" id="3702"/>
    <lineage>
        <taxon>Eukaryota</taxon>
        <taxon>Viridiplantae</taxon>
        <taxon>Streptophyta</taxon>
        <taxon>Embryophyta</taxon>
        <taxon>Tracheophyta</taxon>
        <taxon>Spermatophyta</taxon>
        <taxon>Magnoliopsida</taxon>
        <taxon>eudicotyledons</taxon>
        <taxon>Gunneridae</taxon>
        <taxon>Pentapetalae</taxon>
        <taxon>rosids</taxon>
        <taxon>malvids</taxon>
        <taxon>Brassicales</taxon>
        <taxon>Brassicaceae</taxon>
        <taxon>Camelineae</taxon>
        <taxon>Arabidopsis</taxon>
    </lineage>
</organism>
<reference key="1">
    <citation type="journal article" date="1998" name="DNA Res.">
        <title>Structural analysis of Arabidopsis thaliana chromosome 5. IV. Sequence features of the regions of 1,456,315 bp covered by nineteen physically assigned P1 and TAC clones.</title>
        <authorList>
            <person name="Sato S."/>
            <person name="Kaneko T."/>
            <person name="Kotani H."/>
            <person name="Nakamura Y."/>
            <person name="Asamizu E."/>
            <person name="Miyajima N."/>
            <person name="Tabata S."/>
        </authorList>
    </citation>
    <scope>NUCLEOTIDE SEQUENCE [LARGE SCALE GENOMIC DNA]</scope>
    <source>
        <strain>cv. Columbia</strain>
    </source>
</reference>
<reference key="2">
    <citation type="journal article" date="2017" name="Plant J.">
        <title>Araport11: a complete reannotation of the Arabidopsis thaliana reference genome.</title>
        <authorList>
            <person name="Cheng C.Y."/>
            <person name="Krishnakumar V."/>
            <person name="Chan A.P."/>
            <person name="Thibaud-Nissen F."/>
            <person name="Schobel S."/>
            <person name="Town C.D."/>
        </authorList>
    </citation>
    <scope>GENOME REANNOTATION</scope>
    <source>
        <strain>cv. Columbia</strain>
    </source>
</reference>
<reference key="3">
    <citation type="submission" date="2004-09" db="EMBL/GenBank/DDBJ databases">
        <title>Large-scale analysis of RIKEN Arabidopsis full-length (RAFL) cDNAs.</title>
        <authorList>
            <person name="Totoki Y."/>
            <person name="Seki M."/>
            <person name="Ishida J."/>
            <person name="Nakajima M."/>
            <person name="Enju A."/>
            <person name="Kamiya A."/>
            <person name="Narusaka M."/>
            <person name="Shin-i T."/>
            <person name="Nakagawa M."/>
            <person name="Sakamoto N."/>
            <person name="Oishi K."/>
            <person name="Kohara Y."/>
            <person name="Kobayashi M."/>
            <person name="Toyoda A."/>
            <person name="Sakaki Y."/>
            <person name="Sakurai T."/>
            <person name="Iida K."/>
            <person name="Akiyama K."/>
            <person name="Satou M."/>
            <person name="Toyoda T."/>
            <person name="Konagaya A."/>
            <person name="Carninci P."/>
            <person name="Kawai J."/>
            <person name="Hayashizaki Y."/>
            <person name="Shinozaki K."/>
        </authorList>
    </citation>
    <scope>NUCLEOTIDE SEQUENCE [LARGE SCALE MRNA]</scope>
    <source>
        <strain>cv. Columbia</strain>
    </source>
</reference>
<reference key="4">
    <citation type="journal article" date="2013" name="PLoS ONE">
        <title>40S ribosome biogenesis co-factors are essential for gametophyte and embryo development.</title>
        <authorList>
            <person name="Missbach S."/>
            <person name="Weis B.L."/>
            <person name="Martin R."/>
            <person name="Simm S."/>
            <person name="Bohnsack M.T."/>
            <person name="Schleiff E."/>
        </authorList>
    </citation>
    <scope>FUNCTION</scope>
    <scope>MUTAGENESIS OF ASP-50</scope>
    <scope>DISRUPTION PHENOTYPE</scope>
    <scope>TISSUE SPECIFICITY</scope>
    <scope>SUBCELLULAR LOCATION</scope>
    <scope>SUBUNIT</scope>
    <source>
        <strain>cv. Columbia</strain>
    </source>
</reference>